<evidence type="ECO:0000255" key="1">
    <source>
        <dbReference type="HAMAP-Rule" id="MF_01865"/>
    </source>
</evidence>
<evidence type="ECO:0000255" key="2">
    <source>
        <dbReference type="PROSITE-ProRule" id="PRU01266"/>
    </source>
</evidence>
<reference key="1">
    <citation type="journal article" date="2011" name="J. Bacteriol.">
        <title>Comparative genomics of 28 Salmonella enterica isolates: evidence for CRISPR-mediated adaptive sublineage evolution.</title>
        <authorList>
            <person name="Fricke W.F."/>
            <person name="Mammel M.K."/>
            <person name="McDermott P.F."/>
            <person name="Tartera C."/>
            <person name="White D.G."/>
            <person name="Leclerc J.E."/>
            <person name="Ravel J."/>
            <person name="Cebula T.A."/>
        </authorList>
    </citation>
    <scope>NUCLEOTIDE SEQUENCE [LARGE SCALE GENOMIC DNA]</scope>
    <source>
        <strain>CT_02021853</strain>
    </source>
</reference>
<comment type="function">
    <text evidence="1">Catalyzes the methylthiolation of an aspartic acid residue of ribosomal protein uS12.</text>
</comment>
<comment type="catalytic activity">
    <reaction evidence="1">
        <text>L-aspartate(89)-[ribosomal protein uS12]-hydrogen + (sulfur carrier)-SH + AH2 + 2 S-adenosyl-L-methionine = 3-methylsulfanyl-L-aspartate(89)-[ribosomal protein uS12]-hydrogen + (sulfur carrier)-H + 5'-deoxyadenosine + L-methionine + A + S-adenosyl-L-homocysteine + 2 H(+)</text>
        <dbReference type="Rhea" id="RHEA:37087"/>
        <dbReference type="Rhea" id="RHEA-COMP:10460"/>
        <dbReference type="Rhea" id="RHEA-COMP:10461"/>
        <dbReference type="Rhea" id="RHEA-COMP:14737"/>
        <dbReference type="Rhea" id="RHEA-COMP:14739"/>
        <dbReference type="ChEBI" id="CHEBI:13193"/>
        <dbReference type="ChEBI" id="CHEBI:15378"/>
        <dbReference type="ChEBI" id="CHEBI:17319"/>
        <dbReference type="ChEBI" id="CHEBI:17499"/>
        <dbReference type="ChEBI" id="CHEBI:29917"/>
        <dbReference type="ChEBI" id="CHEBI:29961"/>
        <dbReference type="ChEBI" id="CHEBI:57844"/>
        <dbReference type="ChEBI" id="CHEBI:57856"/>
        <dbReference type="ChEBI" id="CHEBI:59789"/>
        <dbReference type="ChEBI" id="CHEBI:64428"/>
        <dbReference type="ChEBI" id="CHEBI:73599"/>
        <dbReference type="EC" id="2.8.4.4"/>
    </reaction>
</comment>
<comment type="cofactor">
    <cofactor evidence="1">
        <name>[4Fe-4S] cluster</name>
        <dbReference type="ChEBI" id="CHEBI:49883"/>
    </cofactor>
    <text evidence="1">Binds 2 [4Fe-4S] clusters. One cluster is coordinated with 3 cysteines and an exchangeable S-adenosyl-L-methionine.</text>
</comment>
<comment type="subcellular location">
    <subcellularLocation>
        <location evidence="1">Cytoplasm</location>
    </subcellularLocation>
</comment>
<comment type="similarity">
    <text evidence="1">Belongs to the methylthiotransferase family. RimO subfamily.</text>
</comment>
<accession>B5FPB9</accession>
<protein>
    <recommendedName>
        <fullName evidence="1">Ribosomal protein uS12 methylthiotransferase RimO</fullName>
        <shortName evidence="1">uS12 MTTase</shortName>
        <shortName evidence="1">uS12 methylthiotransferase</shortName>
        <ecNumber evidence="1">2.8.4.4</ecNumber>
    </recommendedName>
    <alternativeName>
        <fullName evidence="1">Ribosomal protein uS12 (aspartate-C(3))-methylthiotransferase</fullName>
    </alternativeName>
    <alternativeName>
        <fullName evidence="1">Ribosome maturation factor RimO</fullName>
    </alternativeName>
</protein>
<keyword id="KW-0004">4Fe-4S</keyword>
<keyword id="KW-0963">Cytoplasm</keyword>
<keyword id="KW-0408">Iron</keyword>
<keyword id="KW-0411">Iron-sulfur</keyword>
<keyword id="KW-0479">Metal-binding</keyword>
<keyword id="KW-0949">S-adenosyl-L-methionine</keyword>
<keyword id="KW-0808">Transferase</keyword>
<dbReference type="EC" id="2.8.4.4" evidence="1"/>
<dbReference type="EMBL" id="CP001144">
    <property type="protein sequence ID" value="ACH74431.1"/>
    <property type="molecule type" value="Genomic_DNA"/>
</dbReference>
<dbReference type="RefSeq" id="WP_000073317.1">
    <property type="nucleotide sequence ID" value="NC_011205.1"/>
</dbReference>
<dbReference type="SMR" id="B5FPB9"/>
<dbReference type="KEGG" id="sed:SeD_A0953"/>
<dbReference type="HOGENOM" id="CLU_018697_0_0_6"/>
<dbReference type="Proteomes" id="UP000008322">
    <property type="component" value="Chromosome"/>
</dbReference>
<dbReference type="GO" id="GO:0005829">
    <property type="term" value="C:cytosol"/>
    <property type="evidence" value="ECO:0007669"/>
    <property type="project" value="TreeGrafter"/>
</dbReference>
<dbReference type="GO" id="GO:0051539">
    <property type="term" value="F:4 iron, 4 sulfur cluster binding"/>
    <property type="evidence" value="ECO:0007669"/>
    <property type="project" value="UniProtKB-UniRule"/>
</dbReference>
<dbReference type="GO" id="GO:0035599">
    <property type="term" value="F:aspartic acid methylthiotransferase activity"/>
    <property type="evidence" value="ECO:0007669"/>
    <property type="project" value="TreeGrafter"/>
</dbReference>
<dbReference type="GO" id="GO:0046872">
    <property type="term" value="F:metal ion binding"/>
    <property type="evidence" value="ECO:0007669"/>
    <property type="project" value="UniProtKB-KW"/>
</dbReference>
<dbReference type="GO" id="GO:0103039">
    <property type="term" value="F:protein methylthiotransferase activity"/>
    <property type="evidence" value="ECO:0007669"/>
    <property type="project" value="UniProtKB-EC"/>
</dbReference>
<dbReference type="GO" id="GO:0006400">
    <property type="term" value="P:tRNA modification"/>
    <property type="evidence" value="ECO:0007669"/>
    <property type="project" value="InterPro"/>
</dbReference>
<dbReference type="CDD" id="cd01335">
    <property type="entry name" value="Radical_SAM"/>
    <property type="match status" value="1"/>
</dbReference>
<dbReference type="FunFam" id="2.40.50.140:FF:000060">
    <property type="entry name" value="Ribosomal protein S12 methylthiotransferase RimO"/>
    <property type="match status" value="1"/>
</dbReference>
<dbReference type="FunFam" id="3.40.50.12160:FF:000002">
    <property type="entry name" value="Ribosomal protein S12 methylthiotransferase RimO"/>
    <property type="match status" value="1"/>
</dbReference>
<dbReference type="FunFam" id="3.80.30.20:FF:000001">
    <property type="entry name" value="tRNA-2-methylthio-N(6)-dimethylallyladenosine synthase 2"/>
    <property type="match status" value="1"/>
</dbReference>
<dbReference type="Gene3D" id="3.40.50.12160">
    <property type="entry name" value="Methylthiotransferase, N-terminal domain"/>
    <property type="match status" value="1"/>
</dbReference>
<dbReference type="Gene3D" id="2.40.50.140">
    <property type="entry name" value="Nucleic acid-binding proteins"/>
    <property type="match status" value="1"/>
</dbReference>
<dbReference type="Gene3D" id="3.80.30.20">
    <property type="entry name" value="tm_1862 like domain"/>
    <property type="match status" value="1"/>
</dbReference>
<dbReference type="HAMAP" id="MF_01865">
    <property type="entry name" value="MTTase_RimO"/>
    <property type="match status" value="1"/>
</dbReference>
<dbReference type="InterPro" id="IPR006638">
    <property type="entry name" value="Elp3/MiaA/NifB-like_rSAM"/>
</dbReference>
<dbReference type="InterPro" id="IPR005839">
    <property type="entry name" value="Methylthiotransferase"/>
</dbReference>
<dbReference type="InterPro" id="IPR020612">
    <property type="entry name" value="Methylthiotransferase_CS"/>
</dbReference>
<dbReference type="InterPro" id="IPR013848">
    <property type="entry name" value="Methylthiotransferase_N"/>
</dbReference>
<dbReference type="InterPro" id="IPR038135">
    <property type="entry name" value="Methylthiotransferase_N_sf"/>
</dbReference>
<dbReference type="InterPro" id="IPR012340">
    <property type="entry name" value="NA-bd_OB-fold"/>
</dbReference>
<dbReference type="InterPro" id="IPR005840">
    <property type="entry name" value="Ribosomal_uS12_MeSTrfase_RimO"/>
</dbReference>
<dbReference type="InterPro" id="IPR007197">
    <property type="entry name" value="rSAM"/>
</dbReference>
<dbReference type="InterPro" id="IPR023404">
    <property type="entry name" value="rSAM_horseshoe"/>
</dbReference>
<dbReference type="InterPro" id="IPR002792">
    <property type="entry name" value="TRAM_dom"/>
</dbReference>
<dbReference type="NCBIfam" id="TIGR01125">
    <property type="entry name" value="30S ribosomal protein S12 methylthiotransferase RimO"/>
    <property type="match status" value="1"/>
</dbReference>
<dbReference type="NCBIfam" id="TIGR00089">
    <property type="entry name" value="MiaB/RimO family radical SAM methylthiotransferase"/>
    <property type="match status" value="1"/>
</dbReference>
<dbReference type="PANTHER" id="PTHR43837">
    <property type="entry name" value="RIBOSOMAL PROTEIN S12 METHYLTHIOTRANSFERASE RIMO"/>
    <property type="match status" value="1"/>
</dbReference>
<dbReference type="PANTHER" id="PTHR43837:SF1">
    <property type="entry name" value="RIBOSOMAL PROTEIN US12 METHYLTHIOTRANSFERASE RIMO"/>
    <property type="match status" value="1"/>
</dbReference>
<dbReference type="Pfam" id="PF04055">
    <property type="entry name" value="Radical_SAM"/>
    <property type="match status" value="1"/>
</dbReference>
<dbReference type="Pfam" id="PF18693">
    <property type="entry name" value="TRAM_2"/>
    <property type="match status" value="1"/>
</dbReference>
<dbReference type="Pfam" id="PF00919">
    <property type="entry name" value="UPF0004"/>
    <property type="match status" value="1"/>
</dbReference>
<dbReference type="SFLD" id="SFLDG01082">
    <property type="entry name" value="B12-binding_domain_containing"/>
    <property type="match status" value="1"/>
</dbReference>
<dbReference type="SFLD" id="SFLDG01061">
    <property type="entry name" value="methylthiotransferase"/>
    <property type="match status" value="1"/>
</dbReference>
<dbReference type="SFLD" id="SFLDF00274">
    <property type="entry name" value="ribosomal_protein_S12_methylth"/>
    <property type="match status" value="1"/>
</dbReference>
<dbReference type="SMART" id="SM00729">
    <property type="entry name" value="Elp3"/>
    <property type="match status" value="1"/>
</dbReference>
<dbReference type="SUPFAM" id="SSF102114">
    <property type="entry name" value="Radical SAM enzymes"/>
    <property type="match status" value="1"/>
</dbReference>
<dbReference type="PROSITE" id="PS51449">
    <property type="entry name" value="MTTASE_N"/>
    <property type="match status" value="1"/>
</dbReference>
<dbReference type="PROSITE" id="PS01278">
    <property type="entry name" value="MTTASE_RADICAL"/>
    <property type="match status" value="1"/>
</dbReference>
<dbReference type="PROSITE" id="PS51918">
    <property type="entry name" value="RADICAL_SAM"/>
    <property type="match status" value="1"/>
</dbReference>
<dbReference type="PROSITE" id="PS50926">
    <property type="entry name" value="TRAM"/>
    <property type="match status" value="1"/>
</dbReference>
<organism>
    <name type="scientific">Salmonella dublin (strain CT_02021853)</name>
    <dbReference type="NCBI Taxonomy" id="439851"/>
    <lineage>
        <taxon>Bacteria</taxon>
        <taxon>Pseudomonadati</taxon>
        <taxon>Pseudomonadota</taxon>
        <taxon>Gammaproteobacteria</taxon>
        <taxon>Enterobacterales</taxon>
        <taxon>Enterobacteriaceae</taxon>
        <taxon>Salmonella</taxon>
    </lineage>
</organism>
<name>RIMO_SALDC</name>
<gene>
    <name evidence="1" type="primary">rimO</name>
    <name type="ordered locus">SeD_A0953</name>
</gene>
<proteinExistence type="inferred from homology"/>
<feature type="chain" id="PRO_0000374988" description="Ribosomal protein uS12 methylthiotransferase RimO">
    <location>
        <begin position="1"/>
        <end position="441"/>
    </location>
</feature>
<feature type="domain" description="MTTase N-terminal" evidence="1">
    <location>
        <begin position="8"/>
        <end position="118"/>
    </location>
</feature>
<feature type="domain" description="Radical SAM core" evidence="2">
    <location>
        <begin position="136"/>
        <end position="373"/>
    </location>
</feature>
<feature type="domain" description="TRAM" evidence="1">
    <location>
        <begin position="376"/>
        <end position="441"/>
    </location>
</feature>
<feature type="binding site" evidence="1">
    <location>
        <position position="17"/>
    </location>
    <ligand>
        <name>[4Fe-4S] cluster</name>
        <dbReference type="ChEBI" id="CHEBI:49883"/>
        <label>1</label>
    </ligand>
</feature>
<feature type="binding site" evidence="1">
    <location>
        <position position="53"/>
    </location>
    <ligand>
        <name>[4Fe-4S] cluster</name>
        <dbReference type="ChEBI" id="CHEBI:49883"/>
        <label>1</label>
    </ligand>
</feature>
<feature type="binding site" evidence="1">
    <location>
        <position position="82"/>
    </location>
    <ligand>
        <name>[4Fe-4S] cluster</name>
        <dbReference type="ChEBI" id="CHEBI:49883"/>
        <label>1</label>
    </ligand>
</feature>
<feature type="binding site" evidence="1">
    <location>
        <position position="150"/>
    </location>
    <ligand>
        <name>[4Fe-4S] cluster</name>
        <dbReference type="ChEBI" id="CHEBI:49883"/>
        <label>2</label>
        <note>4Fe-4S-S-AdoMet</note>
    </ligand>
</feature>
<feature type="binding site" evidence="1">
    <location>
        <position position="154"/>
    </location>
    <ligand>
        <name>[4Fe-4S] cluster</name>
        <dbReference type="ChEBI" id="CHEBI:49883"/>
        <label>2</label>
        <note>4Fe-4S-S-AdoMet</note>
    </ligand>
</feature>
<feature type="binding site" evidence="1">
    <location>
        <position position="157"/>
    </location>
    <ligand>
        <name>[4Fe-4S] cluster</name>
        <dbReference type="ChEBI" id="CHEBI:49883"/>
        <label>2</label>
        <note>4Fe-4S-S-AdoMet</note>
    </ligand>
</feature>
<sequence>MSNVTHQPKIGFVSLGCPKNLVDSERILTELRTEGYDVVPRYDDADMVIVNTCGFIDSAVQESLEAIGEALNENGKVIVTGCLGAKEDQIREVHPKVLEITGPHSYEQVLQHVHHYVPKPKHNPFLSLVPEQGVKLTPRHYAYLKISEGCNHRCTFCIIPSMRGDLVSRPIGDVLSEAKRLVDAGVKEILVISQDTSAYGVDVKHRTGFHNGEPVKTSMVSLCEQLSKLGVWTRLHYVYPYPHVDDVIPLMAEGKILPYLDIPLQHASPRILKLMKRPGSVDRQLARIKQWREICPELTLRSTFIVGFPGETEEDFQMLLDFLKEARLDRVGCFKYSPVEGAGANELPDQVPEEVKEERWNRFMQLQQQISAERLQEKVGREILVIVDEVDEEGAIGRSMADAPEIDGAVYLNGETNVKPGDIVRVKVENADEYDLWGSRV</sequence>